<comment type="cofactor">
    <cofactor evidence="1">
        <name>Zn(2+)</name>
        <dbReference type="ChEBI" id="CHEBI:29105"/>
    </cofactor>
    <text evidence="1">Binds 1 zinc ion per subunit.</text>
</comment>
<comment type="subcellular location">
    <subcellularLocation>
        <location evidence="1">Cell inner membrane</location>
        <topology evidence="1">Multi-pass membrane protein</topology>
    </subcellularLocation>
</comment>
<comment type="similarity">
    <text evidence="1">Belongs to the peptidase M48B family.</text>
</comment>
<name>HTPX_YERP3</name>
<organism>
    <name type="scientific">Yersinia pseudotuberculosis serotype O:1b (strain IP 31758)</name>
    <dbReference type="NCBI Taxonomy" id="349747"/>
    <lineage>
        <taxon>Bacteria</taxon>
        <taxon>Pseudomonadati</taxon>
        <taxon>Pseudomonadota</taxon>
        <taxon>Gammaproteobacteria</taxon>
        <taxon>Enterobacterales</taxon>
        <taxon>Yersiniaceae</taxon>
        <taxon>Yersinia</taxon>
    </lineage>
</organism>
<reference key="1">
    <citation type="journal article" date="2007" name="PLoS Genet.">
        <title>The complete genome sequence of Yersinia pseudotuberculosis IP31758, the causative agent of Far East scarlet-like fever.</title>
        <authorList>
            <person name="Eppinger M."/>
            <person name="Rosovitz M.J."/>
            <person name="Fricke W.F."/>
            <person name="Rasko D.A."/>
            <person name="Kokorina G."/>
            <person name="Fayolle C."/>
            <person name="Lindler L.E."/>
            <person name="Carniel E."/>
            <person name="Ravel J."/>
        </authorList>
    </citation>
    <scope>NUCLEOTIDE SEQUENCE [LARGE SCALE GENOMIC DNA]</scope>
    <source>
        <strain>IP 31758</strain>
    </source>
</reference>
<sequence>MMRIALFLLTNLAVMLVFGLVLSLTGIQSSSVQGLMIMAGLFGFGGAFVSLLMSKWMALRSVGGEVIERPRNETEYWLLETVRRQSQQVGIAMPQVAIYQAPDINAFATGARRDASLVAVSTGLLQNMSRDEAEAVIAHEISHVANGDMVTMTLIQGVVNTFVIFISRLIAQIAAGFLSGDRDGESNSPGNPMVYFAVSMVLELVFGILASIITMWFSRHREFHADAGSAKLVGREKMIAALQRLKTSYEPQEAGSMMAFCINGKSKTFSELFMSHPPLDKRIEALRSGQYLK</sequence>
<protein>
    <recommendedName>
        <fullName evidence="1">Protease HtpX</fullName>
        <ecNumber evidence="1">3.4.24.-</ecNumber>
    </recommendedName>
    <alternativeName>
        <fullName evidence="1">Heat shock protein HtpX</fullName>
    </alternativeName>
</protein>
<proteinExistence type="inferred from homology"/>
<keyword id="KW-0997">Cell inner membrane</keyword>
<keyword id="KW-1003">Cell membrane</keyword>
<keyword id="KW-0378">Hydrolase</keyword>
<keyword id="KW-0472">Membrane</keyword>
<keyword id="KW-0479">Metal-binding</keyword>
<keyword id="KW-0482">Metalloprotease</keyword>
<keyword id="KW-0645">Protease</keyword>
<keyword id="KW-0812">Transmembrane</keyword>
<keyword id="KW-1133">Transmembrane helix</keyword>
<keyword id="KW-0862">Zinc</keyword>
<feature type="chain" id="PRO_1000058470" description="Protease HtpX">
    <location>
        <begin position="1"/>
        <end position="293"/>
    </location>
</feature>
<feature type="transmembrane region" description="Helical" evidence="1">
    <location>
        <begin position="4"/>
        <end position="24"/>
    </location>
</feature>
<feature type="transmembrane region" description="Helical" evidence="1">
    <location>
        <begin position="34"/>
        <end position="54"/>
    </location>
</feature>
<feature type="transmembrane region" description="Helical" evidence="1">
    <location>
        <begin position="158"/>
        <end position="178"/>
    </location>
</feature>
<feature type="transmembrane region" description="Helical" evidence="1">
    <location>
        <begin position="193"/>
        <end position="213"/>
    </location>
</feature>
<feature type="active site" evidence="1">
    <location>
        <position position="140"/>
    </location>
</feature>
<feature type="binding site" evidence="1">
    <location>
        <position position="139"/>
    </location>
    <ligand>
        <name>Zn(2+)</name>
        <dbReference type="ChEBI" id="CHEBI:29105"/>
        <note>catalytic</note>
    </ligand>
</feature>
<feature type="binding site" evidence="1">
    <location>
        <position position="143"/>
    </location>
    <ligand>
        <name>Zn(2+)</name>
        <dbReference type="ChEBI" id="CHEBI:29105"/>
        <note>catalytic</note>
    </ligand>
</feature>
<feature type="binding site" evidence="1">
    <location>
        <position position="222"/>
    </location>
    <ligand>
        <name>Zn(2+)</name>
        <dbReference type="ChEBI" id="CHEBI:29105"/>
        <note>catalytic</note>
    </ligand>
</feature>
<accession>A7FHC3</accession>
<gene>
    <name evidence="1" type="primary">htpX</name>
    <name type="ordered locus">YpsIP31758_1674</name>
</gene>
<dbReference type="EC" id="3.4.24.-" evidence="1"/>
<dbReference type="EMBL" id="CP000720">
    <property type="protein sequence ID" value="ABS45808.1"/>
    <property type="molecule type" value="Genomic_DNA"/>
</dbReference>
<dbReference type="RefSeq" id="WP_002210847.1">
    <property type="nucleotide sequence ID" value="NC_009708.1"/>
</dbReference>
<dbReference type="SMR" id="A7FHC3"/>
<dbReference type="MEROPS" id="M48.002"/>
<dbReference type="GeneID" id="57976872"/>
<dbReference type="KEGG" id="ypi:YpsIP31758_1674"/>
<dbReference type="HOGENOM" id="CLU_042266_1_0_6"/>
<dbReference type="Proteomes" id="UP000002412">
    <property type="component" value="Chromosome"/>
</dbReference>
<dbReference type="GO" id="GO:0005886">
    <property type="term" value="C:plasma membrane"/>
    <property type="evidence" value="ECO:0007669"/>
    <property type="project" value="UniProtKB-SubCell"/>
</dbReference>
<dbReference type="GO" id="GO:0004222">
    <property type="term" value="F:metalloendopeptidase activity"/>
    <property type="evidence" value="ECO:0007669"/>
    <property type="project" value="UniProtKB-UniRule"/>
</dbReference>
<dbReference type="GO" id="GO:0008270">
    <property type="term" value="F:zinc ion binding"/>
    <property type="evidence" value="ECO:0007669"/>
    <property type="project" value="UniProtKB-UniRule"/>
</dbReference>
<dbReference type="GO" id="GO:0006508">
    <property type="term" value="P:proteolysis"/>
    <property type="evidence" value="ECO:0007669"/>
    <property type="project" value="UniProtKB-KW"/>
</dbReference>
<dbReference type="CDD" id="cd07335">
    <property type="entry name" value="M48B_HtpX_like"/>
    <property type="match status" value="1"/>
</dbReference>
<dbReference type="FunFam" id="3.30.2010.10:FF:000001">
    <property type="entry name" value="Protease HtpX"/>
    <property type="match status" value="1"/>
</dbReference>
<dbReference type="Gene3D" id="3.30.2010.10">
    <property type="entry name" value="Metalloproteases ('zincins'), catalytic domain"/>
    <property type="match status" value="1"/>
</dbReference>
<dbReference type="HAMAP" id="MF_00188">
    <property type="entry name" value="Pept_M48_protease_HtpX"/>
    <property type="match status" value="1"/>
</dbReference>
<dbReference type="InterPro" id="IPR050083">
    <property type="entry name" value="HtpX_protease"/>
</dbReference>
<dbReference type="InterPro" id="IPR022919">
    <property type="entry name" value="Pept_M48_protease_HtpX"/>
</dbReference>
<dbReference type="InterPro" id="IPR001915">
    <property type="entry name" value="Peptidase_M48"/>
</dbReference>
<dbReference type="NCBIfam" id="NF003965">
    <property type="entry name" value="PRK05457.1"/>
    <property type="match status" value="1"/>
</dbReference>
<dbReference type="PANTHER" id="PTHR43221">
    <property type="entry name" value="PROTEASE HTPX"/>
    <property type="match status" value="1"/>
</dbReference>
<dbReference type="PANTHER" id="PTHR43221:SF1">
    <property type="entry name" value="PROTEASE HTPX"/>
    <property type="match status" value="1"/>
</dbReference>
<dbReference type="Pfam" id="PF01435">
    <property type="entry name" value="Peptidase_M48"/>
    <property type="match status" value="1"/>
</dbReference>
<evidence type="ECO:0000255" key="1">
    <source>
        <dbReference type="HAMAP-Rule" id="MF_00188"/>
    </source>
</evidence>